<gene>
    <name type="primary">EXLA4</name>
    <name type="synonym">EXPL4</name>
    <name type="ordered locus">Os06g0725300</name>
    <name type="ordered locus">LOC_Os06g50960</name>
    <name type="ORF">P0548E04.14</name>
</gene>
<name>EXLA4_ORYSJ</name>
<keyword id="KW-0325">Glycoprotein</keyword>
<keyword id="KW-1185">Reference proteome</keyword>
<keyword id="KW-0964">Secreted</keyword>
<keyword id="KW-0732">Signal</keyword>
<evidence type="ECO:0000255" key="1"/>
<evidence type="ECO:0000255" key="2">
    <source>
        <dbReference type="PROSITE-ProRule" id="PRU00078"/>
    </source>
</evidence>
<evidence type="ECO:0000255" key="3">
    <source>
        <dbReference type="PROSITE-ProRule" id="PRU00079"/>
    </source>
</evidence>
<evidence type="ECO:0000305" key="4"/>
<proteinExistence type="evidence at transcript level"/>
<protein>
    <recommendedName>
        <fullName>Expansin-like A4</fullName>
    </recommendedName>
    <alternativeName>
        <fullName>OsEXLA4</fullName>
    </alternativeName>
    <alternativeName>
        <fullName>OsEXPL4</fullName>
    </alternativeName>
</protein>
<organism>
    <name type="scientific">Oryza sativa subsp. japonica</name>
    <name type="common">Rice</name>
    <dbReference type="NCBI Taxonomy" id="39947"/>
    <lineage>
        <taxon>Eukaryota</taxon>
        <taxon>Viridiplantae</taxon>
        <taxon>Streptophyta</taxon>
        <taxon>Embryophyta</taxon>
        <taxon>Tracheophyta</taxon>
        <taxon>Spermatophyta</taxon>
        <taxon>Magnoliopsida</taxon>
        <taxon>Liliopsida</taxon>
        <taxon>Poales</taxon>
        <taxon>Poaceae</taxon>
        <taxon>BOP clade</taxon>
        <taxon>Oryzoideae</taxon>
        <taxon>Oryzeae</taxon>
        <taxon>Oryzinae</taxon>
        <taxon>Oryza</taxon>
        <taxon>Oryza sativa</taxon>
    </lineage>
</organism>
<comment type="subcellular location">
    <subcellularLocation>
        <location evidence="4">Secreted</location>
    </subcellularLocation>
</comment>
<comment type="similarity">
    <text evidence="4">Belongs to the expansin family. Expansin-like A subfamily.</text>
</comment>
<comment type="sequence caution" evidence="4">
    <conflict type="frameshift">
        <sequence resource="EMBL" id="AK072728"/>
    </conflict>
</comment>
<comment type="online information" name="EXPANSIN homepage">
    <link uri="https://www.dept.psu.edu/biology/groups/expansins/index.htm"/>
</comment>
<reference key="1">
    <citation type="journal article" date="2005" name="Nature">
        <title>The map-based sequence of the rice genome.</title>
        <authorList>
            <consortium name="International rice genome sequencing project (IRGSP)"/>
        </authorList>
    </citation>
    <scope>NUCLEOTIDE SEQUENCE [LARGE SCALE GENOMIC DNA]</scope>
    <source>
        <strain>cv. Nipponbare</strain>
    </source>
</reference>
<reference key="2">
    <citation type="journal article" date="2008" name="Nucleic Acids Res.">
        <title>The rice annotation project database (RAP-DB): 2008 update.</title>
        <authorList>
            <consortium name="The rice annotation project (RAP)"/>
        </authorList>
    </citation>
    <scope>GENOME REANNOTATION</scope>
    <source>
        <strain>cv. Nipponbare</strain>
    </source>
</reference>
<reference key="3">
    <citation type="journal article" date="2013" name="Rice">
        <title>Improvement of the Oryza sativa Nipponbare reference genome using next generation sequence and optical map data.</title>
        <authorList>
            <person name="Kawahara Y."/>
            <person name="de la Bastide M."/>
            <person name="Hamilton J.P."/>
            <person name="Kanamori H."/>
            <person name="McCombie W.R."/>
            <person name="Ouyang S."/>
            <person name="Schwartz D.C."/>
            <person name="Tanaka T."/>
            <person name="Wu J."/>
            <person name="Zhou S."/>
            <person name="Childs K.L."/>
            <person name="Davidson R.M."/>
            <person name="Lin H."/>
            <person name="Quesada-Ocampo L."/>
            <person name="Vaillancourt B."/>
            <person name="Sakai H."/>
            <person name="Lee S.S."/>
            <person name="Kim J."/>
            <person name="Numa H."/>
            <person name="Itoh T."/>
            <person name="Buell C.R."/>
            <person name="Matsumoto T."/>
        </authorList>
    </citation>
    <scope>GENOME REANNOTATION</scope>
    <source>
        <strain>cv. Nipponbare</strain>
    </source>
</reference>
<reference key="4">
    <citation type="journal article" date="2003" name="Science">
        <title>Collection, mapping, and annotation of over 28,000 cDNA clones from japonica rice.</title>
        <authorList>
            <consortium name="The rice full-length cDNA consortium"/>
        </authorList>
    </citation>
    <scope>NUCLEOTIDE SEQUENCE [LARGE SCALE MRNA]</scope>
    <source>
        <strain>cv. Nipponbare</strain>
    </source>
</reference>
<reference key="5">
    <citation type="journal article" date="2004" name="Plant Mol. Biol.">
        <title>Nomenclature for members of the expansin superfamily of genes and proteins.</title>
        <authorList>
            <person name="Kende H."/>
            <person name="Bradford K.J."/>
            <person name="Brummell D.A."/>
            <person name="Cho H.-T."/>
            <person name="Cosgrove D.J."/>
            <person name="Fleming A.J."/>
            <person name="Gehring C."/>
            <person name="Lee Y."/>
            <person name="McQueen-Mason S.J."/>
            <person name="Rose J.K.C."/>
            <person name="Voesenek L.A.C."/>
        </authorList>
    </citation>
    <scope>NOMENCLATURE</scope>
</reference>
<accession>Q5Z980</accession>
<accession>Q0D9D8</accession>
<feature type="signal peptide" evidence="1">
    <location>
        <begin position="1"/>
        <end position="30"/>
    </location>
</feature>
<feature type="chain" id="PRO_0000252101" description="Expansin-like A4">
    <location>
        <begin position="31"/>
        <end position="313"/>
    </location>
</feature>
<feature type="domain" description="Expansin-like EG45" evidence="3">
    <location>
        <begin position="59"/>
        <end position="173"/>
    </location>
</feature>
<feature type="domain" description="Expansin-like CBD" evidence="2">
    <location>
        <begin position="188"/>
        <end position="281"/>
    </location>
</feature>
<feature type="glycosylation site" description="N-linked (GlcNAc...) asparagine" evidence="1">
    <location>
        <position position="124"/>
    </location>
</feature>
<feature type="sequence conflict" description="In Ref. 4; AK072728." evidence="4" ref="4">
    <original>K</original>
    <variation>E</variation>
    <location>
        <position position="107"/>
    </location>
</feature>
<sequence length="313" mass="34120">MDDNGDVHFCHRATAVVALLLLHLVVVANAAAHSCDWCTPRHSTVSILPTPTHAAHLTGGACGFGAAPMELNVAAVTADLFRHGHACGACYQLRCRDRRLCGEDGVKVVVADMAKQPEQEGEMNRTAGGSLQFRITEDAFAAMAKQGVSAHELTRQRTLEVDFRRIPCEYRESRRLAVRVEEASRNPTHLAIRFLYQGGQTDIAAVEIAQANATPPSSSYYSSWRYMTRRDGAPGVWTTSRAPVGPLRLRVVVTAGSGGKWLRSDGEVLPADWRPGEVYDTGLRVTDVAVRSCSLSCAIQDMDSDDGEEEELR</sequence>
<dbReference type="EMBL" id="AP003685">
    <property type="protein sequence ID" value="BAD61700.1"/>
    <property type="molecule type" value="Genomic_DNA"/>
</dbReference>
<dbReference type="EMBL" id="AP008212">
    <property type="protein sequence ID" value="BAF20535.1"/>
    <property type="molecule type" value="Genomic_DNA"/>
</dbReference>
<dbReference type="EMBL" id="AP014962">
    <property type="protein sequence ID" value="BAS99584.1"/>
    <property type="molecule type" value="Genomic_DNA"/>
</dbReference>
<dbReference type="EMBL" id="AK072728">
    <property type="status" value="NOT_ANNOTATED_CDS"/>
    <property type="molecule type" value="mRNA"/>
</dbReference>
<dbReference type="RefSeq" id="XP_015641760.1">
    <property type="nucleotide sequence ID" value="XM_015786274.1"/>
</dbReference>
<dbReference type="SMR" id="Q5Z980"/>
<dbReference type="FunCoup" id="Q5Z980">
    <property type="interactions" value="764"/>
</dbReference>
<dbReference type="STRING" id="39947.Q5Z980"/>
<dbReference type="GlyCosmos" id="Q5Z980">
    <property type="glycosylation" value="1 site, No reported glycans"/>
</dbReference>
<dbReference type="PaxDb" id="39947-Q5Z980"/>
<dbReference type="EnsemblPlants" id="Os06t0725300-01">
    <property type="protein sequence ID" value="Os06t0725300-01"/>
    <property type="gene ID" value="Os06g0725300"/>
</dbReference>
<dbReference type="Gramene" id="Os06t0725300-01">
    <property type="protein sequence ID" value="Os06t0725300-01"/>
    <property type="gene ID" value="Os06g0725300"/>
</dbReference>
<dbReference type="KEGG" id="dosa:Os06g0725300"/>
<dbReference type="eggNOG" id="ENOG502QSGZ">
    <property type="taxonomic scope" value="Eukaryota"/>
</dbReference>
<dbReference type="HOGENOM" id="CLU_027462_3_1_1"/>
<dbReference type="InParanoid" id="Q5Z980"/>
<dbReference type="OMA" id="WRPMARR"/>
<dbReference type="OrthoDB" id="681754at2759"/>
<dbReference type="Proteomes" id="UP000000763">
    <property type="component" value="Chromosome 6"/>
</dbReference>
<dbReference type="Proteomes" id="UP000059680">
    <property type="component" value="Chromosome 6"/>
</dbReference>
<dbReference type="GO" id="GO:0005576">
    <property type="term" value="C:extracellular region"/>
    <property type="evidence" value="ECO:0007669"/>
    <property type="project" value="UniProtKB-SubCell"/>
</dbReference>
<dbReference type="GO" id="GO:0009828">
    <property type="term" value="P:plant-type cell wall loosening"/>
    <property type="evidence" value="ECO:0000250"/>
    <property type="project" value="UniProtKB"/>
</dbReference>
<dbReference type="Gene3D" id="2.60.40.760">
    <property type="entry name" value="Expansin, cellulose-binding-like domain"/>
    <property type="match status" value="1"/>
</dbReference>
<dbReference type="Gene3D" id="2.40.40.10">
    <property type="entry name" value="RlpA-like domain"/>
    <property type="match status" value="1"/>
</dbReference>
<dbReference type="InterPro" id="IPR007112">
    <property type="entry name" value="Expansin/allergen_DPBB_dom"/>
</dbReference>
<dbReference type="InterPro" id="IPR007117">
    <property type="entry name" value="Expansin_CBD"/>
</dbReference>
<dbReference type="InterPro" id="IPR036749">
    <property type="entry name" value="Expansin_CBD_sf"/>
</dbReference>
<dbReference type="InterPro" id="IPR036908">
    <property type="entry name" value="RlpA-like_sf"/>
</dbReference>
<dbReference type="PANTHER" id="PTHR31692">
    <property type="entry name" value="EXPANSIN-B3"/>
    <property type="match status" value="1"/>
</dbReference>
<dbReference type="PANTHER" id="PTHR31692:SF25">
    <property type="entry name" value="EXPANSIN-LIKE A4"/>
    <property type="match status" value="1"/>
</dbReference>
<dbReference type="Pfam" id="PF01357">
    <property type="entry name" value="Expansin_C"/>
    <property type="match status" value="1"/>
</dbReference>
<dbReference type="SUPFAM" id="SSF50685">
    <property type="entry name" value="Barwin-like endoglucanases"/>
    <property type="match status" value="1"/>
</dbReference>
<dbReference type="SUPFAM" id="SSF49590">
    <property type="entry name" value="PHL pollen allergen"/>
    <property type="match status" value="1"/>
</dbReference>
<dbReference type="PROSITE" id="PS50843">
    <property type="entry name" value="EXPANSIN_CBD"/>
    <property type="match status" value="1"/>
</dbReference>
<dbReference type="PROSITE" id="PS50842">
    <property type="entry name" value="EXPANSIN_EG45"/>
    <property type="match status" value="1"/>
</dbReference>